<organism>
    <name type="scientific">Escherichia coli O157:H7</name>
    <dbReference type="NCBI Taxonomy" id="83334"/>
    <lineage>
        <taxon>Bacteria</taxon>
        <taxon>Pseudomonadati</taxon>
        <taxon>Pseudomonadota</taxon>
        <taxon>Gammaproteobacteria</taxon>
        <taxon>Enterobacterales</taxon>
        <taxon>Enterobacteriaceae</taxon>
        <taxon>Escherichia</taxon>
    </lineage>
</organism>
<sequence>MNPIVINRLQRKLGYTFNHQELLQQALTHRSASSKHNERLEFLGDSILSYVIANALYHRFPRVDEGDMSRMRATLVRGNTLAELAREFELGECLRLGPGELKSGGFRRESILADTVEALIGGVFLDSDIQTVEKLILNWYQTRLDEISPGDKQKDPKTRLQEYLQGRHLPLPTYLVVQVRGEAHDQEFTIHCQVSGLSEPVVGTGSSRRKAEQAAAEQALKKLELE</sequence>
<dbReference type="EC" id="3.1.26.3" evidence="1"/>
<dbReference type="EMBL" id="AE005174">
    <property type="protein sequence ID" value="AAG57682.1"/>
    <property type="molecule type" value="Genomic_DNA"/>
</dbReference>
<dbReference type="EMBL" id="BA000007">
    <property type="protein sequence ID" value="BAB36856.1"/>
    <property type="molecule type" value="Genomic_DNA"/>
</dbReference>
<dbReference type="PIR" id="A91058">
    <property type="entry name" value="A91058"/>
</dbReference>
<dbReference type="PIR" id="F85902">
    <property type="entry name" value="F85902"/>
</dbReference>
<dbReference type="RefSeq" id="NP_311460.1">
    <property type="nucleotide sequence ID" value="NC_002695.1"/>
</dbReference>
<dbReference type="RefSeq" id="WP_001068343.1">
    <property type="nucleotide sequence ID" value="NZ_VOAI01000001.1"/>
</dbReference>
<dbReference type="SMR" id="P0A7Y2"/>
<dbReference type="STRING" id="155864.Z3848"/>
<dbReference type="GeneID" id="914894"/>
<dbReference type="GeneID" id="93774524"/>
<dbReference type="KEGG" id="ece:Z3848"/>
<dbReference type="KEGG" id="ecs:ECs_3433"/>
<dbReference type="PATRIC" id="fig|386585.9.peg.3587"/>
<dbReference type="eggNOG" id="COG0571">
    <property type="taxonomic scope" value="Bacteria"/>
</dbReference>
<dbReference type="HOGENOM" id="CLU_000907_1_1_6"/>
<dbReference type="OMA" id="LTHKSCK"/>
<dbReference type="Proteomes" id="UP000000558">
    <property type="component" value="Chromosome"/>
</dbReference>
<dbReference type="Proteomes" id="UP000002519">
    <property type="component" value="Chromosome"/>
</dbReference>
<dbReference type="GO" id="GO:0005737">
    <property type="term" value="C:cytoplasm"/>
    <property type="evidence" value="ECO:0007669"/>
    <property type="project" value="UniProtKB-SubCell"/>
</dbReference>
<dbReference type="GO" id="GO:0003725">
    <property type="term" value="F:double-stranded RNA binding"/>
    <property type="evidence" value="ECO:0007669"/>
    <property type="project" value="TreeGrafter"/>
</dbReference>
<dbReference type="GO" id="GO:0046872">
    <property type="term" value="F:metal ion binding"/>
    <property type="evidence" value="ECO:0007669"/>
    <property type="project" value="UniProtKB-KW"/>
</dbReference>
<dbReference type="GO" id="GO:0004525">
    <property type="term" value="F:ribonuclease III activity"/>
    <property type="evidence" value="ECO:0007669"/>
    <property type="project" value="UniProtKB-UniRule"/>
</dbReference>
<dbReference type="GO" id="GO:0019843">
    <property type="term" value="F:rRNA binding"/>
    <property type="evidence" value="ECO:0007669"/>
    <property type="project" value="UniProtKB-KW"/>
</dbReference>
<dbReference type="GO" id="GO:0006397">
    <property type="term" value="P:mRNA processing"/>
    <property type="evidence" value="ECO:0007669"/>
    <property type="project" value="UniProtKB-UniRule"/>
</dbReference>
<dbReference type="GO" id="GO:0010468">
    <property type="term" value="P:regulation of gene expression"/>
    <property type="evidence" value="ECO:0007669"/>
    <property type="project" value="TreeGrafter"/>
</dbReference>
<dbReference type="GO" id="GO:0006364">
    <property type="term" value="P:rRNA processing"/>
    <property type="evidence" value="ECO:0007669"/>
    <property type="project" value="UniProtKB-UniRule"/>
</dbReference>
<dbReference type="GO" id="GO:0008033">
    <property type="term" value="P:tRNA processing"/>
    <property type="evidence" value="ECO:0007669"/>
    <property type="project" value="UniProtKB-KW"/>
</dbReference>
<dbReference type="CDD" id="cd10845">
    <property type="entry name" value="DSRM_RNAse_III_family"/>
    <property type="match status" value="1"/>
</dbReference>
<dbReference type="CDD" id="cd00593">
    <property type="entry name" value="RIBOc"/>
    <property type="match status" value="1"/>
</dbReference>
<dbReference type="FunFam" id="1.10.1520.10:FF:000001">
    <property type="entry name" value="Ribonuclease 3"/>
    <property type="match status" value="1"/>
</dbReference>
<dbReference type="FunFam" id="3.30.160.20:FF:000003">
    <property type="entry name" value="Ribonuclease 3"/>
    <property type="match status" value="1"/>
</dbReference>
<dbReference type="Gene3D" id="3.30.160.20">
    <property type="match status" value="1"/>
</dbReference>
<dbReference type="Gene3D" id="1.10.1520.10">
    <property type="entry name" value="Ribonuclease III domain"/>
    <property type="match status" value="1"/>
</dbReference>
<dbReference type="HAMAP" id="MF_00104">
    <property type="entry name" value="RNase_III"/>
    <property type="match status" value="1"/>
</dbReference>
<dbReference type="InterPro" id="IPR014720">
    <property type="entry name" value="dsRBD_dom"/>
</dbReference>
<dbReference type="InterPro" id="IPR011907">
    <property type="entry name" value="RNase_III"/>
</dbReference>
<dbReference type="InterPro" id="IPR000999">
    <property type="entry name" value="RNase_III_dom"/>
</dbReference>
<dbReference type="InterPro" id="IPR036389">
    <property type="entry name" value="RNase_III_sf"/>
</dbReference>
<dbReference type="NCBIfam" id="TIGR02191">
    <property type="entry name" value="RNaseIII"/>
    <property type="match status" value="1"/>
</dbReference>
<dbReference type="PANTHER" id="PTHR11207:SF0">
    <property type="entry name" value="RIBONUCLEASE 3"/>
    <property type="match status" value="1"/>
</dbReference>
<dbReference type="PANTHER" id="PTHR11207">
    <property type="entry name" value="RIBONUCLEASE III"/>
    <property type="match status" value="1"/>
</dbReference>
<dbReference type="Pfam" id="PF00035">
    <property type="entry name" value="dsrm"/>
    <property type="match status" value="1"/>
</dbReference>
<dbReference type="Pfam" id="PF14622">
    <property type="entry name" value="Ribonucleas_3_3"/>
    <property type="match status" value="1"/>
</dbReference>
<dbReference type="SMART" id="SM00358">
    <property type="entry name" value="DSRM"/>
    <property type="match status" value="1"/>
</dbReference>
<dbReference type="SMART" id="SM00535">
    <property type="entry name" value="RIBOc"/>
    <property type="match status" value="1"/>
</dbReference>
<dbReference type="SUPFAM" id="SSF54768">
    <property type="entry name" value="dsRNA-binding domain-like"/>
    <property type="match status" value="1"/>
</dbReference>
<dbReference type="SUPFAM" id="SSF69065">
    <property type="entry name" value="RNase III domain-like"/>
    <property type="match status" value="1"/>
</dbReference>
<dbReference type="PROSITE" id="PS50137">
    <property type="entry name" value="DS_RBD"/>
    <property type="match status" value="1"/>
</dbReference>
<dbReference type="PROSITE" id="PS00517">
    <property type="entry name" value="RNASE_3_1"/>
    <property type="match status" value="1"/>
</dbReference>
<dbReference type="PROSITE" id="PS50142">
    <property type="entry name" value="RNASE_3_2"/>
    <property type="match status" value="1"/>
</dbReference>
<evidence type="ECO:0000255" key="1">
    <source>
        <dbReference type="HAMAP-Rule" id="MF_00104"/>
    </source>
</evidence>
<evidence type="ECO:0000269" key="2">
    <source>
    </source>
</evidence>
<accession>P0A7Y2</accession>
<accession>P05797</accession>
<accession>P06141</accession>
<reference key="1">
    <citation type="journal article" date="2001" name="Nature">
        <title>Genome sequence of enterohaemorrhagic Escherichia coli O157:H7.</title>
        <authorList>
            <person name="Perna N.T."/>
            <person name="Plunkett G. III"/>
            <person name="Burland V."/>
            <person name="Mau B."/>
            <person name="Glasner J.D."/>
            <person name="Rose D.J."/>
            <person name="Mayhew G.F."/>
            <person name="Evans P.S."/>
            <person name="Gregor J."/>
            <person name="Kirkpatrick H.A."/>
            <person name="Posfai G."/>
            <person name="Hackett J."/>
            <person name="Klink S."/>
            <person name="Boutin A."/>
            <person name="Shao Y."/>
            <person name="Miller L."/>
            <person name="Grotbeck E.J."/>
            <person name="Davis N.W."/>
            <person name="Lim A."/>
            <person name="Dimalanta E.T."/>
            <person name="Potamousis K."/>
            <person name="Apodaca J."/>
            <person name="Anantharaman T.S."/>
            <person name="Lin J."/>
            <person name="Yen G."/>
            <person name="Schwartz D.C."/>
            <person name="Welch R.A."/>
            <person name="Blattner F.R."/>
        </authorList>
    </citation>
    <scope>NUCLEOTIDE SEQUENCE [LARGE SCALE GENOMIC DNA]</scope>
    <source>
        <strain>O157:H7 / EDL933 / ATCC 700927 / EHEC</strain>
    </source>
</reference>
<reference key="2">
    <citation type="journal article" date="2001" name="DNA Res.">
        <title>Complete genome sequence of enterohemorrhagic Escherichia coli O157:H7 and genomic comparison with a laboratory strain K-12.</title>
        <authorList>
            <person name="Hayashi T."/>
            <person name="Makino K."/>
            <person name="Ohnishi M."/>
            <person name="Kurokawa K."/>
            <person name="Ishii K."/>
            <person name="Yokoyama K."/>
            <person name="Han C.-G."/>
            <person name="Ohtsubo E."/>
            <person name="Nakayama K."/>
            <person name="Murata T."/>
            <person name="Tanaka M."/>
            <person name="Tobe T."/>
            <person name="Iida T."/>
            <person name="Takami H."/>
            <person name="Honda T."/>
            <person name="Sasakawa C."/>
            <person name="Ogasawara N."/>
            <person name="Yasunaga T."/>
            <person name="Kuhara S."/>
            <person name="Shiba T."/>
            <person name="Hattori M."/>
            <person name="Shinagawa H."/>
        </authorList>
    </citation>
    <scope>NUCLEOTIDE SEQUENCE [LARGE SCALE GENOMIC DNA]</scope>
    <source>
        <strain>O157:H7 / Sakai / RIMD 0509952 / EHEC</strain>
    </source>
</reference>
<reference key="3">
    <citation type="journal article" date="2014" name="Nucleic Acids Res.">
        <title>The ZorO-OrzO type I toxin-antitoxin locus: repression by the OrzO antitoxin.</title>
        <authorList>
            <person name="Wen J."/>
            <person name="Won D."/>
            <person name="Fozo E.M."/>
        </authorList>
    </citation>
    <scope>FUNCTION IN TYPE I TOXIN-ANTITOXIN REGULATION</scope>
    <scope>DISRUPTION PHENOTYPE</scope>
    <source>
        <strain>O157:H7 / EDL933 / ATCC 700927 / EHEC</strain>
    </source>
</reference>
<proteinExistence type="evidence at protein level"/>
<gene>
    <name evidence="1" type="primary">rnc</name>
    <name type="ordered locus">Z3848</name>
    <name type="ordered locus">ECs3433</name>
</gene>
<keyword id="KW-0963">Cytoplasm</keyword>
<keyword id="KW-0255">Endonuclease</keyword>
<keyword id="KW-0378">Hydrolase</keyword>
<keyword id="KW-0460">Magnesium</keyword>
<keyword id="KW-0479">Metal-binding</keyword>
<keyword id="KW-0507">mRNA processing</keyword>
<keyword id="KW-0540">Nuclease</keyword>
<keyword id="KW-1185">Reference proteome</keyword>
<keyword id="KW-0694">RNA-binding</keyword>
<keyword id="KW-0698">rRNA processing</keyword>
<keyword id="KW-0699">rRNA-binding</keyword>
<keyword id="KW-0819">tRNA processing</keyword>
<name>RNC_ECO57</name>
<protein>
    <recommendedName>
        <fullName evidence="1">Ribonuclease 3</fullName>
        <ecNumber evidence="1">3.1.26.3</ecNumber>
    </recommendedName>
    <alternativeName>
        <fullName evidence="1">Ribonuclease III</fullName>
        <shortName evidence="1">RNase III</shortName>
    </alternativeName>
</protein>
<feature type="chain" id="PRO_0000180396" description="Ribonuclease 3">
    <location>
        <begin position="1"/>
        <end position="226"/>
    </location>
</feature>
<feature type="domain" description="RNase III" evidence="1">
    <location>
        <begin position="6"/>
        <end position="128"/>
    </location>
</feature>
<feature type="domain" description="DRBM" evidence="1">
    <location>
        <begin position="155"/>
        <end position="225"/>
    </location>
</feature>
<feature type="active site" evidence="1">
    <location>
        <position position="45"/>
    </location>
</feature>
<feature type="active site" evidence="1">
    <location>
        <position position="117"/>
    </location>
</feature>
<feature type="binding site" evidence="1">
    <location>
        <position position="41"/>
    </location>
    <ligand>
        <name>Mg(2+)</name>
        <dbReference type="ChEBI" id="CHEBI:18420"/>
    </ligand>
</feature>
<feature type="binding site" evidence="1">
    <location>
        <position position="114"/>
    </location>
    <ligand>
        <name>Mg(2+)</name>
        <dbReference type="ChEBI" id="CHEBI:18420"/>
    </ligand>
</feature>
<feature type="binding site" evidence="1">
    <location>
        <position position="117"/>
    </location>
    <ligand>
        <name>Mg(2+)</name>
        <dbReference type="ChEBI" id="CHEBI:18420"/>
    </ligand>
</feature>
<comment type="function">
    <text evidence="1 2">Digests double-stranded RNA. Involved in the processing of primary rRNA transcript to yield the immediate precursors to the large and small rRNAs (23S and 16S). Processes some mRNAs, and tRNAs when they are encoded in the rRNA operon. Processes pre-crRNA and tracrRNA of type II CRISPR loci if present in the organism (By similarity). Involved in degradation of type I toxin-antitoxin system duplex RNAs (PubMed:24203704).</text>
</comment>
<comment type="catalytic activity">
    <reaction evidence="1">
        <text>Endonucleolytic cleavage to 5'-phosphomonoester.</text>
        <dbReference type="EC" id="3.1.26.3"/>
    </reaction>
</comment>
<comment type="cofactor">
    <cofactor evidence="1">
        <name>Mg(2+)</name>
        <dbReference type="ChEBI" id="CHEBI:18420"/>
    </cofactor>
</comment>
<comment type="subunit">
    <text evidence="1">Homodimer.</text>
</comment>
<comment type="subcellular location">
    <subcellularLocation>
        <location evidence="1">Cytoplasm</location>
    </subcellularLocation>
</comment>
<comment type="disruption phenotype">
    <text evidence="2">Decreased levels of type I toxin-antitoxin sRNA orzO, and increased toxicity of toxin ZorO.</text>
</comment>
<comment type="similarity">
    <text evidence="1">Belongs to the ribonuclease III family.</text>
</comment>